<organism>
    <name type="scientific">Loxosceles deserta</name>
    <name type="common">Desert recluse spider</name>
    <dbReference type="NCBI Taxonomy" id="424440"/>
    <lineage>
        <taxon>Eukaryota</taxon>
        <taxon>Metazoa</taxon>
        <taxon>Ecdysozoa</taxon>
        <taxon>Arthropoda</taxon>
        <taxon>Chelicerata</taxon>
        <taxon>Arachnida</taxon>
        <taxon>Araneae</taxon>
        <taxon>Araneomorphae</taxon>
        <taxon>Haplogynae</taxon>
        <taxon>Scytodoidea</taxon>
        <taxon>Sicariidae</taxon>
        <taxon>Loxosceles</taxon>
    </lineage>
</organism>
<keyword id="KW-0204">Cytolysis</keyword>
<keyword id="KW-1061">Dermonecrotic toxin</keyword>
<keyword id="KW-0903">Direct protein sequencing</keyword>
<keyword id="KW-1015">Disulfide bond</keyword>
<keyword id="KW-0354">Hemolysis</keyword>
<keyword id="KW-0442">Lipid degradation</keyword>
<keyword id="KW-0443">Lipid metabolism</keyword>
<keyword id="KW-0456">Lyase</keyword>
<keyword id="KW-0460">Magnesium</keyword>
<keyword id="KW-0479">Metal-binding</keyword>
<keyword id="KW-0964">Secreted</keyword>
<keyword id="KW-0800">Toxin</keyword>
<name>AX1_LOXDE</name>
<accession>P0C2K1</accession>
<sequence length="35" mass="3947">ANKRPIWIMGHMVNAIYQIDEFVNLGANSIETDVS</sequence>
<protein>
    <recommendedName>
        <fullName>Dermonecrotic toxin LdSicTox-alpha-1</fullName>
        <ecNumber evidence="5">4.6.1.-</ecNumber>
    </recommendedName>
    <alternativeName>
        <fullName>Phospholipase D</fullName>
        <shortName>PLD</shortName>
    </alternativeName>
    <alternativeName>
        <fullName>Sphingomyelin phosphodiesterase D</fullName>
        <shortName>SMD</shortName>
        <shortName>SMase D</shortName>
        <shortName>Sphingomyelinase D</shortName>
    </alternativeName>
</protein>
<proteinExistence type="evidence at protein level"/>
<dbReference type="EC" id="4.6.1.-" evidence="5"/>
<dbReference type="SMR" id="P0C2K1"/>
<dbReference type="ArachnoServer" id="AS000159">
    <property type="toxin name" value="Sphingomyelinase D (LdSicTox1) (N-terminal fragment)"/>
</dbReference>
<dbReference type="GO" id="GO:0005576">
    <property type="term" value="C:extracellular region"/>
    <property type="evidence" value="ECO:0007669"/>
    <property type="project" value="UniProtKB-SubCell"/>
</dbReference>
<dbReference type="GO" id="GO:0016829">
    <property type="term" value="F:lyase activity"/>
    <property type="evidence" value="ECO:0007669"/>
    <property type="project" value="UniProtKB-KW"/>
</dbReference>
<dbReference type="GO" id="GO:0046872">
    <property type="term" value="F:metal ion binding"/>
    <property type="evidence" value="ECO:0007669"/>
    <property type="project" value="UniProtKB-KW"/>
</dbReference>
<dbReference type="GO" id="GO:0008081">
    <property type="term" value="F:phosphoric diester hydrolase activity"/>
    <property type="evidence" value="ECO:0007669"/>
    <property type="project" value="InterPro"/>
</dbReference>
<dbReference type="GO" id="GO:0090729">
    <property type="term" value="F:toxin activity"/>
    <property type="evidence" value="ECO:0007669"/>
    <property type="project" value="UniProtKB-KW"/>
</dbReference>
<dbReference type="GO" id="GO:0031640">
    <property type="term" value="P:killing of cells of another organism"/>
    <property type="evidence" value="ECO:0007669"/>
    <property type="project" value="UniProtKB-KW"/>
</dbReference>
<dbReference type="GO" id="GO:0016042">
    <property type="term" value="P:lipid catabolic process"/>
    <property type="evidence" value="ECO:0007669"/>
    <property type="project" value="UniProtKB-KW"/>
</dbReference>
<dbReference type="Gene3D" id="3.20.20.190">
    <property type="entry name" value="Phosphatidylinositol (PI) phosphodiesterase"/>
    <property type="match status" value="1"/>
</dbReference>
<dbReference type="InterPro" id="IPR017946">
    <property type="entry name" value="PLC-like_Pdiesterase_TIM-brl"/>
</dbReference>
<reference key="1">
    <citation type="journal article" date="2001" name="Toxicon">
        <title>Antigenic cross-reactivity of venoms from medically important north american Loxosceles spider species.</title>
        <authorList>
            <person name="Gomez H.F."/>
            <person name="Miller M.J."/>
            <person name="Waggener M.W."/>
            <person name="Lankford H.A."/>
            <person name="Warren J.S."/>
        </authorList>
    </citation>
    <scope>PROTEIN SEQUENCE</scope>
    <scope>SUBCELLULAR LOCATION</scope>
    <source>
        <tissue>Venom</tissue>
    </source>
</reference>
<feature type="chain" id="PRO_0000279557" description="Dermonecrotic toxin LdSicTox-alpha-1">
    <location>
        <begin position="1"/>
        <end position="35" status="greater than"/>
    </location>
</feature>
<feature type="active site" evidence="6">
    <location>
        <position position="11"/>
    </location>
</feature>
<feature type="binding site" evidence="6">
    <location>
        <position position="31"/>
    </location>
    <ligand>
        <name>Mg(2+)</name>
        <dbReference type="ChEBI" id="CHEBI:18420"/>
    </ligand>
</feature>
<feature type="binding site" evidence="6">
    <location>
        <position position="33"/>
    </location>
    <ligand>
        <name>Mg(2+)</name>
        <dbReference type="ChEBI" id="CHEBI:18420"/>
    </ligand>
</feature>
<feature type="non-terminal residue">
    <location>
        <position position="35"/>
    </location>
</feature>
<comment type="function">
    <text evidence="2 4">Dermonecrotic toxins cleave the phosphodiester linkage between the phosphate and headgroup of certain phospholipids (sphingolipid and lysolipid substrates), forming an alcohol (often choline) and a cyclic phosphate (By similarity). This toxin acts on sphingomyelin (SM) (By similarity). It may also act on ceramide phosphoethanolamine (CPE), lysophosphatidylcholine (LPC) and lysophosphatidylethanolamine (LPE), but not on lysophosphatidylserine (LPS), and lysophosphatidylglycerol (LPG) (By similarity). It acts by transphosphatidylation, releasing exclusively cyclic phosphate products as second products (By similarity). Induces dermonecrosis, hemolysis, increased vascular permeability, edema, inflammatory response, and platelet aggregation (By similarity).</text>
</comment>
<comment type="catalytic activity">
    <reaction evidence="2">
        <text>an N-(acyl)-sphingosylphosphocholine = an N-(acyl)-sphingosyl-1,3-cyclic phosphate + choline</text>
        <dbReference type="Rhea" id="RHEA:60652"/>
        <dbReference type="ChEBI" id="CHEBI:15354"/>
        <dbReference type="ChEBI" id="CHEBI:64583"/>
        <dbReference type="ChEBI" id="CHEBI:143892"/>
    </reaction>
</comment>
<comment type="catalytic activity">
    <reaction evidence="2">
        <text>an N-(acyl)-sphingosylphosphoethanolamine = an N-(acyl)-sphingosyl-1,3-cyclic phosphate + ethanolamine</text>
        <dbReference type="Rhea" id="RHEA:60648"/>
        <dbReference type="ChEBI" id="CHEBI:57603"/>
        <dbReference type="ChEBI" id="CHEBI:143891"/>
        <dbReference type="ChEBI" id="CHEBI:143892"/>
    </reaction>
</comment>
<comment type="catalytic activity">
    <reaction evidence="2">
        <text>a 1-acyl-sn-glycero-3-phosphocholine = a 1-acyl-sn-glycero-2,3-cyclic phosphate + choline</text>
        <dbReference type="Rhea" id="RHEA:60700"/>
        <dbReference type="ChEBI" id="CHEBI:15354"/>
        <dbReference type="ChEBI" id="CHEBI:58168"/>
        <dbReference type="ChEBI" id="CHEBI:143947"/>
    </reaction>
</comment>
<comment type="catalytic activity">
    <reaction evidence="2">
        <text>a 1-acyl-sn-glycero-3-phosphoethanolamine = a 1-acyl-sn-glycero-2,3-cyclic phosphate + ethanolamine</text>
        <dbReference type="Rhea" id="RHEA:60704"/>
        <dbReference type="ChEBI" id="CHEBI:57603"/>
        <dbReference type="ChEBI" id="CHEBI:64381"/>
        <dbReference type="ChEBI" id="CHEBI:143947"/>
    </reaction>
</comment>
<comment type="cofactor">
    <cofactor evidence="6">
        <name>Mg(2+)</name>
        <dbReference type="ChEBI" id="CHEBI:18420"/>
    </cofactor>
    <text evidence="6">Binds 1 Mg(2+) ion per subunit.</text>
</comment>
<comment type="subcellular location">
    <subcellularLocation>
        <location evidence="7">Secreted</location>
    </subcellularLocation>
</comment>
<comment type="tissue specificity">
    <text evidence="9">Expressed by the venom gland.</text>
</comment>
<comment type="PTM">
    <text evidence="1">Contains 1 disulfide bond.</text>
</comment>
<comment type="similarity">
    <text evidence="8">Belongs to the arthropod phospholipase D family. Class I subfamily.</text>
</comment>
<comment type="caution">
    <text evidence="2 3 5">The most common activity assay for dermonecrotic toxins detects enzymatic activity by monitoring choline release from substrate. Liberation of choline from sphingomyelin (SM) or lysophosphatidylcholine (LPC) is commonly assumed to result from substrate hydrolysis, giving either ceramide-1-phosphate (C1P) or lysophosphatidic acid (LPA), respectively, as a second product. However, two studies from Lajoie and colleagues (2013 and 2015) report the observation of exclusive formation of cyclic phosphate products as second products, resulting from intramolecular transphosphatidylation. Cyclic phosphates have vastly different biological properties from their monoester counterparts, and they may be relevant to the pathology of brown spider envenomation.</text>
</comment>
<evidence type="ECO:0000250" key="1"/>
<evidence type="ECO:0000250" key="2">
    <source>
        <dbReference type="UniProtKB" id="A0A0D4WTV1"/>
    </source>
</evidence>
<evidence type="ECO:0000250" key="3">
    <source>
        <dbReference type="UniProtKB" id="A0A0D4WV12"/>
    </source>
</evidence>
<evidence type="ECO:0000250" key="4">
    <source>
        <dbReference type="UniProtKB" id="P0CE80"/>
    </source>
</evidence>
<evidence type="ECO:0000250" key="5">
    <source>
        <dbReference type="UniProtKB" id="Q4ZFU2"/>
    </source>
</evidence>
<evidence type="ECO:0000250" key="6">
    <source>
        <dbReference type="UniProtKB" id="Q8I914"/>
    </source>
</evidence>
<evidence type="ECO:0000269" key="7">
    <source>
    </source>
</evidence>
<evidence type="ECO:0000305" key="8"/>
<evidence type="ECO:0000305" key="9">
    <source>
    </source>
</evidence>